<reference key="1">
    <citation type="journal article" date="2013" name="Nature">
        <title>The zebrafish reference genome sequence and its relationship to the human genome.</title>
        <authorList>
            <person name="Howe K."/>
            <person name="Clark M.D."/>
            <person name="Torroja C.F."/>
            <person name="Torrance J."/>
            <person name="Berthelot C."/>
            <person name="Muffato M."/>
            <person name="Collins J.E."/>
            <person name="Humphray S."/>
            <person name="McLaren K."/>
            <person name="Matthews L."/>
            <person name="McLaren S."/>
            <person name="Sealy I."/>
            <person name="Caccamo M."/>
            <person name="Churcher C."/>
            <person name="Scott C."/>
            <person name="Barrett J.C."/>
            <person name="Koch R."/>
            <person name="Rauch G.J."/>
            <person name="White S."/>
            <person name="Chow W."/>
            <person name="Kilian B."/>
            <person name="Quintais L.T."/>
            <person name="Guerra-Assuncao J.A."/>
            <person name="Zhou Y."/>
            <person name="Gu Y."/>
            <person name="Yen J."/>
            <person name="Vogel J.H."/>
            <person name="Eyre T."/>
            <person name="Redmond S."/>
            <person name="Banerjee R."/>
            <person name="Chi J."/>
            <person name="Fu B."/>
            <person name="Langley E."/>
            <person name="Maguire S.F."/>
            <person name="Laird G.K."/>
            <person name="Lloyd D."/>
            <person name="Kenyon E."/>
            <person name="Donaldson S."/>
            <person name="Sehra H."/>
            <person name="Almeida-King J."/>
            <person name="Loveland J."/>
            <person name="Trevanion S."/>
            <person name="Jones M."/>
            <person name="Quail M."/>
            <person name="Willey D."/>
            <person name="Hunt A."/>
            <person name="Burton J."/>
            <person name="Sims S."/>
            <person name="McLay K."/>
            <person name="Plumb B."/>
            <person name="Davis J."/>
            <person name="Clee C."/>
            <person name="Oliver K."/>
            <person name="Clark R."/>
            <person name="Riddle C."/>
            <person name="Elliot D."/>
            <person name="Threadgold G."/>
            <person name="Harden G."/>
            <person name="Ware D."/>
            <person name="Begum S."/>
            <person name="Mortimore B."/>
            <person name="Kerry G."/>
            <person name="Heath P."/>
            <person name="Phillimore B."/>
            <person name="Tracey A."/>
            <person name="Corby N."/>
            <person name="Dunn M."/>
            <person name="Johnson C."/>
            <person name="Wood J."/>
            <person name="Clark S."/>
            <person name="Pelan S."/>
            <person name="Griffiths G."/>
            <person name="Smith M."/>
            <person name="Glithero R."/>
            <person name="Howden P."/>
            <person name="Barker N."/>
            <person name="Lloyd C."/>
            <person name="Stevens C."/>
            <person name="Harley J."/>
            <person name="Holt K."/>
            <person name="Panagiotidis G."/>
            <person name="Lovell J."/>
            <person name="Beasley H."/>
            <person name="Henderson C."/>
            <person name="Gordon D."/>
            <person name="Auger K."/>
            <person name="Wright D."/>
            <person name="Collins J."/>
            <person name="Raisen C."/>
            <person name="Dyer L."/>
            <person name="Leung K."/>
            <person name="Robertson L."/>
            <person name="Ambridge K."/>
            <person name="Leongamornlert D."/>
            <person name="McGuire S."/>
            <person name="Gilderthorp R."/>
            <person name="Griffiths C."/>
            <person name="Manthravadi D."/>
            <person name="Nichol S."/>
            <person name="Barker G."/>
            <person name="Whitehead S."/>
            <person name="Kay M."/>
            <person name="Brown J."/>
            <person name="Murnane C."/>
            <person name="Gray E."/>
            <person name="Humphries M."/>
            <person name="Sycamore N."/>
            <person name="Barker D."/>
            <person name="Saunders D."/>
            <person name="Wallis J."/>
            <person name="Babbage A."/>
            <person name="Hammond S."/>
            <person name="Mashreghi-Mohammadi M."/>
            <person name="Barr L."/>
            <person name="Martin S."/>
            <person name="Wray P."/>
            <person name="Ellington A."/>
            <person name="Matthews N."/>
            <person name="Ellwood M."/>
            <person name="Woodmansey R."/>
            <person name="Clark G."/>
            <person name="Cooper J."/>
            <person name="Tromans A."/>
            <person name="Grafham D."/>
            <person name="Skuce C."/>
            <person name="Pandian R."/>
            <person name="Andrews R."/>
            <person name="Harrison E."/>
            <person name="Kimberley A."/>
            <person name="Garnett J."/>
            <person name="Fosker N."/>
            <person name="Hall R."/>
            <person name="Garner P."/>
            <person name="Kelly D."/>
            <person name="Bird C."/>
            <person name="Palmer S."/>
            <person name="Gehring I."/>
            <person name="Berger A."/>
            <person name="Dooley C.M."/>
            <person name="Ersan-Urun Z."/>
            <person name="Eser C."/>
            <person name="Geiger H."/>
            <person name="Geisler M."/>
            <person name="Karotki L."/>
            <person name="Kirn A."/>
            <person name="Konantz J."/>
            <person name="Konantz M."/>
            <person name="Oberlander M."/>
            <person name="Rudolph-Geiger S."/>
            <person name="Teucke M."/>
            <person name="Lanz C."/>
            <person name="Raddatz G."/>
            <person name="Osoegawa K."/>
            <person name="Zhu B."/>
            <person name="Rapp A."/>
            <person name="Widaa S."/>
            <person name="Langford C."/>
            <person name="Yang F."/>
            <person name="Schuster S.C."/>
            <person name="Carter N.P."/>
            <person name="Harrow J."/>
            <person name="Ning Z."/>
            <person name="Herrero J."/>
            <person name="Searle S.M."/>
            <person name="Enright A."/>
            <person name="Geisler R."/>
            <person name="Plasterk R.H."/>
            <person name="Lee C."/>
            <person name="Westerfield M."/>
            <person name="de Jong P.J."/>
            <person name="Zon L.I."/>
            <person name="Postlethwait J.H."/>
            <person name="Nusslein-Volhard C."/>
            <person name="Hubbard T.J."/>
            <person name="Roest Crollius H."/>
            <person name="Rogers J."/>
            <person name="Stemple D.L."/>
        </authorList>
    </citation>
    <scope>NUCLEOTIDE SEQUENCE [LARGE SCALE GENOMIC DNA]</scope>
    <source>
        <strain>Tuebingen</strain>
    </source>
</reference>
<reference key="2">
    <citation type="submission" date="2004-07" db="EMBL/GenBank/DDBJ databases">
        <authorList>
            <consortium name="NIH - Zebrafish Gene Collection (ZGC) project"/>
        </authorList>
    </citation>
    <scope>NUCLEOTIDE SEQUENCE [LARGE SCALE MRNA]</scope>
    <source>
        <tissue>Brain</tissue>
    </source>
</reference>
<dbReference type="EMBL" id="BX927163">
    <property type="protein sequence ID" value="CAN87987.1"/>
    <property type="molecule type" value="Genomic_DNA"/>
</dbReference>
<dbReference type="EMBL" id="BC076289">
    <property type="protein sequence ID" value="AAH76289.1"/>
    <property type="molecule type" value="mRNA"/>
</dbReference>
<dbReference type="RefSeq" id="NP_001093546.1">
    <property type="nucleotide sequence ID" value="NM_001100076.1"/>
</dbReference>
<dbReference type="SMR" id="Q6DGQ1"/>
<dbReference type="FunCoup" id="Q6DGQ1">
    <property type="interactions" value="817"/>
</dbReference>
<dbReference type="STRING" id="7955.ENSDARP00000135507"/>
<dbReference type="PaxDb" id="7955-ENSDARP00000043219"/>
<dbReference type="Ensembl" id="ENSDART00000162383">
    <property type="protein sequence ID" value="ENSDARP00000135507"/>
    <property type="gene ID" value="ENSDARG00000099527"/>
</dbReference>
<dbReference type="GeneID" id="100002175"/>
<dbReference type="KEGG" id="dre:100002175"/>
<dbReference type="AGR" id="ZFIN:ZDB-GENE-040718-215"/>
<dbReference type="CTD" id="28512"/>
<dbReference type="ZFIN" id="ZDB-GENE-040718-215">
    <property type="gene designation" value="nkiras1"/>
</dbReference>
<dbReference type="eggNOG" id="KOG3883">
    <property type="taxonomic scope" value="Eukaryota"/>
</dbReference>
<dbReference type="HOGENOM" id="CLU_041217_17_0_1"/>
<dbReference type="InParanoid" id="Q6DGQ1"/>
<dbReference type="OMA" id="IANMHSR"/>
<dbReference type="OrthoDB" id="10002389at2759"/>
<dbReference type="PhylomeDB" id="Q6DGQ1"/>
<dbReference type="TreeFam" id="TF314483"/>
<dbReference type="PRO" id="PR:Q6DGQ1"/>
<dbReference type="Proteomes" id="UP000000437">
    <property type="component" value="Chromosome 19"/>
</dbReference>
<dbReference type="Bgee" id="ENSDARG00000099527">
    <property type="expression patterns" value="Expressed in ovary and 21 other cell types or tissues"/>
</dbReference>
<dbReference type="GO" id="GO:0005737">
    <property type="term" value="C:cytoplasm"/>
    <property type="evidence" value="ECO:0007669"/>
    <property type="project" value="UniProtKB-SubCell"/>
</dbReference>
<dbReference type="GO" id="GO:0005525">
    <property type="term" value="F:GTP binding"/>
    <property type="evidence" value="ECO:0007669"/>
    <property type="project" value="UniProtKB-KW"/>
</dbReference>
<dbReference type="GO" id="GO:0032794">
    <property type="term" value="F:GTPase activating protein binding"/>
    <property type="evidence" value="ECO:0000318"/>
    <property type="project" value="GO_Central"/>
</dbReference>
<dbReference type="GO" id="GO:0003924">
    <property type="term" value="F:GTPase activity"/>
    <property type="evidence" value="ECO:0007669"/>
    <property type="project" value="InterPro"/>
</dbReference>
<dbReference type="GO" id="GO:0043124">
    <property type="term" value="P:negative regulation of canonical NF-kappaB signal transduction"/>
    <property type="evidence" value="ECO:0007669"/>
    <property type="project" value="InterPro"/>
</dbReference>
<dbReference type="GO" id="GO:0032484">
    <property type="term" value="P:Ral protein signal transduction"/>
    <property type="evidence" value="ECO:0000318"/>
    <property type="project" value="GO_Central"/>
</dbReference>
<dbReference type="Gene3D" id="3.40.50.300">
    <property type="entry name" value="P-loop containing nucleotide triphosphate hydrolases"/>
    <property type="match status" value="1"/>
</dbReference>
<dbReference type="InterPro" id="IPR042227">
    <property type="entry name" value="KBRS"/>
</dbReference>
<dbReference type="InterPro" id="IPR027417">
    <property type="entry name" value="P-loop_NTPase"/>
</dbReference>
<dbReference type="InterPro" id="IPR005225">
    <property type="entry name" value="Small_GTP-bd"/>
</dbReference>
<dbReference type="InterPro" id="IPR001806">
    <property type="entry name" value="Small_GTPase"/>
</dbReference>
<dbReference type="NCBIfam" id="TIGR00231">
    <property type="entry name" value="small_GTP"/>
    <property type="match status" value="1"/>
</dbReference>
<dbReference type="PANTHER" id="PTHR46152">
    <property type="entry name" value="NF-KAPPA-B INHIBITOR-INTERACTING RAS-LIKE PROTEIN"/>
    <property type="match status" value="1"/>
</dbReference>
<dbReference type="PANTHER" id="PTHR46152:SF1">
    <property type="entry name" value="NF-KAPPA-B INHIBITOR-INTERACTING RAS-LIKE PROTEIN 1"/>
    <property type="match status" value="1"/>
</dbReference>
<dbReference type="Pfam" id="PF00071">
    <property type="entry name" value="Ras"/>
    <property type="match status" value="1"/>
</dbReference>
<dbReference type="PRINTS" id="PR00449">
    <property type="entry name" value="RASTRNSFRMNG"/>
</dbReference>
<dbReference type="SMART" id="SM00175">
    <property type="entry name" value="RAB"/>
    <property type="match status" value="1"/>
</dbReference>
<dbReference type="SMART" id="SM00173">
    <property type="entry name" value="RAS"/>
    <property type="match status" value="1"/>
</dbReference>
<dbReference type="SUPFAM" id="SSF52540">
    <property type="entry name" value="P-loop containing nucleoside triphosphate hydrolases"/>
    <property type="match status" value="1"/>
</dbReference>
<dbReference type="PROSITE" id="PS51419">
    <property type="entry name" value="RAB"/>
    <property type="match status" value="1"/>
</dbReference>
<keyword id="KW-0963">Cytoplasm</keyword>
<keyword id="KW-0342">GTP-binding</keyword>
<keyword id="KW-0547">Nucleotide-binding</keyword>
<keyword id="KW-1185">Reference proteome</keyword>
<feature type="chain" id="PRO_0000225678" description="NF-kappa-B inhibitor-interacting Ras-like protein 1">
    <location>
        <begin position="1"/>
        <end position="192"/>
    </location>
</feature>
<feature type="region of interest" description="Small GTPase-like">
    <location>
        <begin position="1"/>
        <end position="192"/>
    </location>
</feature>
<feature type="region of interest" description="Disordered" evidence="2">
    <location>
        <begin position="169"/>
        <end position="192"/>
    </location>
</feature>
<feature type="short sequence motif" description="Effector region">
    <location>
        <begin position="35"/>
        <end position="43"/>
    </location>
</feature>
<feature type="binding site" evidence="1">
    <location>
        <begin position="11"/>
        <end position="18"/>
    </location>
    <ligand>
        <name>GTP</name>
        <dbReference type="ChEBI" id="CHEBI:37565"/>
    </ligand>
</feature>
<feature type="binding site" evidence="1">
    <location>
        <begin position="61"/>
        <end position="65"/>
    </location>
    <ligand>
        <name>GTP</name>
        <dbReference type="ChEBI" id="CHEBI:37565"/>
    </ligand>
</feature>
<feature type="binding site" evidence="1">
    <location>
        <begin position="120"/>
        <end position="123"/>
    </location>
    <ligand>
        <name>GTP</name>
        <dbReference type="ChEBI" id="CHEBI:37565"/>
    </ligand>
</feature>
<feature type="sequence conflict" description="In Ref. 2; AAH76289." evidence="3" ref="2">
    <original>D</original>
    <variation>G</variation>
    <location>
        <position position="70"/>
    </location>
</feature>
<evidence type="ECO:0000250" key="1"/>
<evidence type="ECO:0000256" key="2">
    <source>
        <dbReference type="SAM" id="MobiDB-lite"/>
    </source>
</evidence>
<evidence type="ECO:0000305" key="3"/>
<sequence length="192" mass="21546">MGKGCKVVVCGMASVGKTAILEQLLYGSHTVGAETSDTQEDIYVASVETDRGVREQLRLYDTRGLREGLDLPKHFFSVADGFVLVYSVDCLESFKKVEVLKKEIDRSRDKKEVMVMVLGNKCELRERRQVDQDTAQQWARGEKVKLWEVTVTDRSTLIEPFTSLTSRLTQPQSKSAFPLPGRKSKGTPSNDI</sequence>
<comment type="function">
    <text evidence="1">Atypical Ras-like protein that acts as a potent regulator of NF-kappa-B activity by preventing the degradation of NF-kappa-B inhibitor beta (NFKBIB) by most signals, explaining why NFKBIB is more resistant to degradation.</text>
</comment>
<comment type="subcellular location">
    <subcellularLocation>
        <location evidence="1">Cytoplasm</location>
    </subcellularLocation>
</comment>
<comment type="domain">
    <text>In contrast to other members of the Ras family, the members of the KappaB-Ras subfamily do not contain the conserved Gly and Gln residues in positions 13 and 65, which are replaced by Ala and Leu residues, respectively, and are therefore similar to the constitutively active forms of oncogenic forms of Ras. This suggests that members of this family are clearly different from other small GTPases proteins.</text>
</comment>
<comment type="similarity">
    <text evidence="3">Belongs to the small GTPase superfamily. Ras family. KappaB-Ras subfamily.</text>
</comment>
<protein>
    <recommendedName>
        <fullName>NF-kappa-B inhibitor-interacting Ras-like protein 1</fullName>
    </recommendedName>
    <alternativeName>
        <fullName>I-kappa-B-interacting Ras-like protein 1</fullName>
        <shortName>Kappa B-Ras protein 1</shortName>
        <shortName>KappaB-Ras1</shortName>
    </alternativeName>
</protein>
<proteinExistence type="evidence at transcript level"/>
<accession>Q6DGQ1</accession>
<accession>A5PMZ9</accession>
<name>KBRS1_DANRE</name>
<gene>
    <name type="primary">nkiras1</name>
    <name type="ORF">si:dkey-126a1.3</name>
    <name type="ORF">zgc:92823</name>
</gene>
<organism>
    <name type="scientific">Danio rerio</name>
    <name type="common">Zebrafish</name>
    <name type="synonym">Brachydanio rerio</name>
    <dbReference type="NCBI Taxonomy" id="7955"/>
    <lineage>
        <taxon>Eukaryota</taxon>
        <taxon>Metazoa</taxon>
        <taxon>Chordata</taxon>
        <taxon>Craniata</taxon>
        <taxon>Vertebrata</taxon>
        <taxon>Euteleostomi</taxon>
        <taxon>Actinopterygii</taxon>
        <taxon>Neopterygii</taxon>
        <taxon>Teleostei</taxon>
        <taxon>Ostariophysi</taxon>
        <taxon>Cypriniformes</taxon>
        <taxon>Danionidae</taxon>
        <taxon>Danioninae</taxon>
        <taxon>Danio</taxon>
    </lineage>
</organism>